<organism>
    <name type="scientific">Yersinia pestis (strain Pestoides F)</name>
    <dbReference type="NCBI Taxonomy" id="386656"/>
    <lineage>
        <taxon>Bacteria</taxon>
        <taxon>Pseudomonadati</taxon>
        <taxon>Pseudomonadota</taxon>
        <taxon>Gammaproteobacteria</taxon>
        <taxon>Enterobacterales</taxon>
        <taxon>Yersiniaceae</taxon>
        <taxon>Yersinia</taxon>
    </lineage>
</organism>
<comment type="function">
    <text evidence="1">Activates ribosomal RNA transcription. Plays a direct role in upstream activation of rRNA promoters.</text>
</comment>
<comment type="subunit">
    <text evidence="1">Homodimer.</text>
</comment>
<comment type="similarity">
    <text evidence="1">Belongs to the transcriptional regulatory Fis family.</text>
</comment>
<feature type="chain" id="PRO_1000023354" description="DNA-binding protein Fis">
    <location>
        <begin position="1"/>
        <end position="98"/>
    </location>
</feature>
<feature type="DNA-binding region" description="H-T-H motif" evidence="1">
    <location>
        <begin position="74"/>
        <end position="93"/>
    </location>
</feature>
<evidence type="ECO:0000255" key="1">
    <source>
        <dbReference type="HAMAP-Rule" id="MF_00166"/>
    </source>
</evidence>
<proteinExistence type="inferred from homology"/>
<sequence>MFEQRVNSDVLTVATVNSQDQVTQKPLRDSVKQALKNYFAQLNGQDVSDLYELVLAEVEQPLLDMVMQYTRGNQTRAALMMGINRGTLRKKLKKYGMN</sequence>
<accession>A4THB7</accession>
<reference key="1">
    <citation type="submission" date="2007-02" db="EMBL/GenBank/DDBJ databases">
        <title>Complete sequence of chromosome of Yersinia pestis Pestoides F.</title>
        <authorList>
            <consortium name="US DOE Joint Genome Institute"/>
            <person name="Copeland A."/>
            <person name="Lucas S."/>
            <person name="Lapidus A."/>
            <person name="Barry K."/>
            <person name="Detter J.C."/>
            <person name="Glavina del Rio T."/>
            <person name="Hammon N."/>
            <person name="Israni S."/>
            <person name="Dalin E."/>
            <person name="Tice H."/>
            <person name="Pitluck S."/>
            <person name="Di Bartolo G."/>
            <person name="Chain P."/>
            <person name="Malfatti S."/>
            <person name="Shin M."/>
            <person name="Vergez L."/>
            <person name="Schmutz J."/>
            <person name="Larimer F."/>
            <person name="Land M."/>
            <person name="Hauser L."/>
            <person name="Worsham P."/>
            <person name="Chu M."/>
            <person name="Bearden S."/>
            <person name="Garcia E."/>
            <person name="Richardson P."/>
        </authorList>
    </citation>
    <scope>NUCLEOTIDE SEQUENCE [LARGE SCALE GENOMIC DNA]</scope>
    <source>
        <strain>Pestoides F</strain>
    </source>
</reference>
<dbReference type="EMBL" id="CP000668">
    <property type="protein sequence ID" value="ABP38679.1"/>
    <property type="molecule type" value="Genomic_DNA"/>
</dbReference>
<dbReference type="RefSeq" id="WP_002210061.1">
    <property type="nucleotide sequence ID" value="NZ_CP009715.1"/>
</dbReference>
<dbReference type="SMR" id="A4THB7"/>
<dbReference type="GeneID" id="97454355"/>
<dbReference type="KEGG" id="ypp:YPDSF_0260"/>
<dbReference type="PATRIC" id="fig|386656.14.peg.1554"/>
<dbReference type="GO" id="GO:0003700">
    <property type="term" value="F:DNA-binding transcription factor activity"/>
    <property type="evidence" value="ECO:0007669"/>
    <property type="project" value="UniProtKB-UniRule"/>
</dbReference>
<dbReference type="GO" id="GO:0043565">
    <property type="term" value="F:sequence-specific DNA binding"/>
    <property type="evidence" value="ECO:0007669"/>
    <property type="project" value="InterPro"/>
</dbReference>
<dbReference type="FunFam" id="1.10.10.60:FF:000006">
    <property type="entry name" value="DNA-binding protein Fis"/>
    <property type="match status" value="1"/>
</dbReference>
<dbReference type="Gene3D" id="1.10.10.60">
    <property type="entry name" value="Homeodomain-like"/>
    <property type="match status" value="1"/>
</dbReference>
<dbReference type="HAMAP" id="MF_00166">
    <property type="entry name" value="DNA_binding_Fis"/>
    <property type="match status" value="1"/>
</dbReference>
<dbReference type="InterPro" id="IPR005412">
    <property type="entry name" value="Fis_DNA-bd"/>
</dbReference>
<dbReference type="InterPro" id="IPR009057">
    <property type="entry name" value="Homeodomain-like_sf"/>
</dbReference>
<dbReference type="InterPro" id="IPR002197">
    <property type="entry name" value="HTH_Fis"/>
</dbReference>
<dbReference type="InterPro" id="IPR050207">
    <property type="entry name" value="Trans_regulatory_Fis"/>
</dbReference>
<dbReference type="NCBIfam" id="NF001659">
    <property type="entry name" value="PRK00430.1"/>
    <property type="match status" value="1"/>
</dbReference>
<dbReference type="PANTHER" id="PTHR47918">
    <property type="entry name" value="DNA-BINDING PROTEIN FIS"/>
    <property type="match status" value="1"/>
</dbReference>
<dbReference type="PANTHER" id="PTHR47918:SF1">
    <property type="entry name" value="DNA-BINDING PROTEIN FIS"/>
    <property type="match status" value="1"/>
</dbReference>
<dbReference type="Pfam" id="PF02954">
    <property type="entry name" value="HTH_8"/>
    <property type="match status" value="1"/>
</dbReference>
<dbReference type="PIRSF" id="PIRSF002097">
    <property type="entry name" value="DNA-binding_Fis"/>
    <property type="match status" value="1"/>
</dbReference>
<dbReference type="PRINTS" id="PR01591">
    <property type="entry name" value="DNABINDNGFIS"/>
</dbReference>
<dbReference type="PRINTS" id="PR01590">
    <property type="entry name" value="HTHFIS"/>
</dbReference>
<dbReference type="SUPFAM" id="SSF46689">
    <property type="entry name" value="Homeodomain-like"/>
    <property type="match status" value="1"/>
</dbReference>
<keyword id="KW-0010">Activator</keyword>
<keyword id="KW-0238">DNA-binding</keyword>
<keyword id="KW-0804">Transcription</keyword>
<keyword id="KW-0805">Transcription regulation</keyword>
<name>FIS_YERPP</name>
<gene>
    <name evidence="1" type="primary">fis</name>
    <name type="ordered locus">YPDSF_0260</name>
</gene>
<protein>
    <recommendedName>
        <fullName evidence="1">DNA-binding protein Fis</fullName>
    </recommendedName>
</protein>